<evidence type="ECO:0000255" key="1">
    <source>
        <dbReference type="HAMAP-Rule" id="MF_00658"/>
    </source>
</evidence>
<comment type="function">
    <text evidence="1">Specifically methylates the pseudouridine at position 1915 (m3Psi1915) in 23S rRNA.</text>
</comment>
<comment type="catalytic activity">
    <reaction evidence="1">
        <text>pseudouridine(1915) in 23S rRNA + S-adenosyl-L-methionine = N(3)-methylpseudouridine(1915) in 23S rRNA + S-adenosyl-L-homocysteine + H(+)</text>
        <dbReference type="Rhea" id="RHEA:42752"/>
        <dbReference type="Rhea" id="RHEA-COMP:10221"/>
        <dbReference type="Rhea" id="RHEA-COMP:10222"/>
        <dbReference type="ChEBI" id="CHEBI:15378"/>
        <dbReference type="ChEBI" id="CHEBI:57856"/>
        <dbReference type="ChEBI" id="CHEBI:59789"/>
        <dbReference type="ChEBI" id="CHEBI:65314"/>
        <dbReference type="ChEBI" id="CHEBI:74486"/>
        <dbReference type="EC" id="2.1.1.177"/>
    </reaction>
</comment>
<comment type="subunit">
    <text evidence="1">Homodimer.</text>
</comment>
<comment type="subcellular location">
    <subcellularLocation>
        <location evidence="1">Cytoplasm</location>
    </subcellularLocation>
</comment>
<comment type="similarity">
    <text evidence="1">Belongs to the RNA methyltransferase RlmH family.</text>
</comment>
<keyword id="KW-0963">Cytoplasm</keyword>
<keyword id="KW-0489">Methyltransferase</keyword>
<keyword id="KW-1185">Reference proteome</keyword>
<keyword id="KW-0698">rRNA processing</keyword>
<keyword id="KW-0949">S-adenosyl-L-methionine</keyword>
<keyword id="KW-0808">Transferase</keyword>
<dbReference type="EC" id="2.1.1.177" evidence="1"/>
<dbReference type="EMBL" id="CP000513">
    <property type="protein sequence ID" value="ABQ14343.1"/>
    <property type="molecule type" value="Genomic_DNA"/>
</dbReference>
<dbReference type="RefSeq" id="WP_012031251.1">
    <property type="nucleotide sequence ID" value="NC_009446.1"/>
</dbReference>
<dbReference type="SMR" id="A5EY47"/>
<dbReference type="STRING" id="246195.DNO_0935"/>
<dbReference type="KEGG" id="dno:DNO_0935"/>
<dbReference type="eggNOG" id="COG1576">
    <property type="taxonomic scope" value="Bacteria"/>
</dbReference>
<dbReference type="HOGENOM" id="CLU_100552_1_0_6"/>
<dbReference type="OrthoDB" id="9806643at2"/>
<dbReference type="Proteomes" id="UP000000248">
    <property type="component" value="Chromosome"/>
</dbReference>
<dbReference type="GO" id="GO:0005737">
    <property type="term" value="C:cytoplasm"/>
    <property type="evidence" value="ECO:0007669"/>
    <property type="project" value="UniProtKB-SubCell"/>
</dbReference>
<dbReference type="GO" id="GO:0070038">
    <property type="term" value="F:rRNA (pseudouridine-N3-)-methyltransferase activity"/>
    <property type="evidence" value="ECO:0007669"/>
    <property type="project" value="UniProtKB-UniRule"/>
</dbReference>
<dbReference type="CDD" id="cd18081">
    <property type="entry name" value="RlmH-like"/>
    <property type="match status" value="1"/>
</dbReference>
<dbReference type="Gene3D" id="3.40.1280.10">
    <property type="match status" value="1"/>
</dbReference>
<dbReference type="HAMAP" id="MF_00658">
    <property type="entry name" value="23SrRNA_methyltr_H"/>
    <property type="match status" value="1"/>
</dbReference>
<dbReference type="InterPro" id="IPR029028">
    <property type="entry name" value="Alpha/beta_knot_MTases"/>
</dbReference>
<dbReference type="InterPro" id="IPR003742">
    <property type="entry name" value="RlmH-like"/>
</dbReference>
<dbReference type="InterPro" id="IPR029026">
    <property type="entry name" value="tRNA_m1G_MTases_N"/>
</dbReference>
<dbReference type="NCBIfam" id="NF000986">
    <property type="entry name" value="PRK00103.1-4"/>
    <property type="match status" value="1"/>
</dbReference>
<dbReference type="NCBIfam" id="TIGR00246">
    <property type="entry name" value="tRNA_RlmH_YbeA"/>
    <property type="match status" value="1"/>
</dbReference>
<dbReference type="PANTHER" id="PTHR33603">
    <property type="entry name" value="METHYLTRANSFERASE"/>
    <property type="match status" value="1"/>
</dbReference>
<dbReference type="PANTHER" id="PTHR33603:SF1">
    <property type="entry name" value="RIBOSOMAL RNA LARGE SUBUNIT METHYLTRANSFERASE H"/>
    <property type="match status" value="1"/>
</dbReference>
<dbReference type="Pfam" id="PF02590">
    <property type="entry name" value="SPOUT_MTase"/>
    <property type="match status" value="1"/>
</dbReference>
<dbReference type="PIRSF" id="PIRSF004505">
    <property type="entry name" value="MT_bac"/>
    <property type="match status" value="1"/>
</dbReference>
<dbReference type="SUPFAM" id="SSF75217">
    <property type="entry name" value="alpha/beta knot"/>
    <property type="match status" value="1"/>
</dbReference>
<feature type="chain" id="PRO_1000082801" description="Ribosomal RNA large subunit methyltransferase H">
    <location>
        <begin position="1"/>
        <end position="156"/>
    </location>
</feature>
<feature type="binding site" evidence="1">
    <location>
        <position position="73"/>
    </location>
    <ligand>
        <name>S-adenosyl-L-methionine</name>
        <dbReference type="ChEBI" id="CHEBI:59789"/>
    </ligand>
</feature>
<feature type="binding site" evidence="1">
    <location>
        <position position="104"/>
    </location>
    <ligand>
        <name>S-adenosyl-L-methionine</name>
        <dbReference type="ChEBI" id="CHEBI:59789"/>
    </ligand>
</feature>
<feature type="binding site" evidence="1">
    <location>
        <begin position="123"/>
        <end position="128"/>
    </location>
    <ligand>
        <name>S-adenosyl-L-methionine</name>
        <dbReference type="ChEBI" id="CHEBI:59789"/>
    </ligand>
</feature>
<gene>
    <name evidence="1" type="primary">rlmH</name>
    <name type="ordered locus">DNO_0935</name>
</gene>
<reference key="1">
    <citation type="journal article" date="2007" name="Nat. Biotechnol.">
        <title>Genome sequence and identification of candidate vaccine antigens from the animal pathogen Dichelobacter nodosus.</title>
        <authorList>
            <person name="Myers G.S.A."/>
            <person name="Parker D."/>
            <person name="Al-Hasani K."/>
            <person name="Kennan R.M."/>
            <person name="Seemann T."/>
            <person name="Ren Q."/>
            <person name="Badger J.H."/>
            <person name="Selengut J.D."/>
            <person name="Deboy R.T."/>
            <person name="Tettelin H."/>
            <person name="Boyce J.D."/>
            <person name="McCarl V.P."/>
            <person name="Han X."/>
            <person name="Nelson W.C."/>
            <person name="Madupu R."/>
            <person name="Mohamoud Y."/>
            <person name="Holley T."/>
            <person name="Fedorova N."/>
            <person name="Khouri H."/>
            <person name="Bottomley S.P."/>
            <person name="Whittington R.J."/>
            <person name="Adler B."/>
            <person name="Songer J.G."/>
            <person name="Rood J.I."/>
            <person name="Paulsen I.T."/>
        </authorList>
    </citation>
    <scope>NUCLEOTIDE SEQUENCE [LARGE SCALE GENOMIC DNA]</scope>
    <source>
        <strain>VCS1703A</strain>
    </source>
</reference>
<protein>
    <recommendedName>
        <fullName evidence="1">Ribosomal RNA large subunit methyltransferase H</fullName>
        <ecNumber evidence="1">2.1.1.177</ecNumber>
    </recommendedName>
    <alternativeName>
        <fullName evidence="1">23S rRNA (pseudouridine1915-N3)-methyltransferase</fullName>
    </alternativeName>
    <alternativeName>
        <fullName evidence="1">23S rRNA m3Psi1915 methyltransferase</fullName>
    </alternativeName>
    <alternativeName>
        <fullName evidence="1">rRNA (pseudouridine-N3-)-methyltransferase RlmH</fullName>
    </alternativeName>
</protein>
<sequence>MDITIIAVGNKMPDWVNEGFSDYATRFNAEINMQLKEIPLQKRGDDKQIAAARSKESAQILAALAGKDYVVTLDIAGKNYRSEQLAARLQFWQENARSLALIIGGPEGLSAEVKNRAQESWSLGALTLPHPLVRIIVAEALYRAWSINHHHPYHRA</sequence>
<accession>A5EY47</accession>
<proteinExistence type="inferred from homology"/>
<name>RLMH_DICNV</name>
<organism>
    <name type="scientific">Dichelobacter nodosus (strain VCS1703A)</name>
    <dbReference type="NCBI Taxonomy" id="246195"/>
    <lineage>
        <taxon>Bacteria</taxon>
        <taxon>Pseudomonadati</taxon>
        <taxon>Pseudomonadota</taxon>
        <taxon>Gammaproteobacteria</taxon>
        <taxon>Cardiobacteriales</taxon>
        <taxon>Cardiobacteriaceae</taxon>
        <taxon>Dichelobacter</taxon>
    </lineage>
</organism>